<gene>
    <name evidence="1" type="primary">secY</name>
    <name type="ordered locus">SE_1803</name>
</gene>
<organism>
    <name type="scientific">Staphylococcus epidermidis (strain ATCC 12228 / FDA PCI 1200)</name>
    <dbReference type="NCBI Taxonomy" id="176280"/>
    <lineage>
        <taxon>Bacteria</taxon>
        <taxon>Bacillati</taxon>
        <taxon>Bacillota</taxon>
        <taxon>Bacilli</taxon>
        <taxon>Bacillales</taxon>
        <taxon>Staphylococcaceae</taxon>
        <taxon>Staphylococcus</taxon>
    </lineage>
</organism>
<dbReference type="EMBL" id="AE015929">
    <property type="protein sequence ID" value="AAO05444.1"/>
    <property type="molecule type" value="Genomic_DNA"/>
</dbReference>
<dbReference type="RefSeq" id="NP_765358.1">
    <property type="nucleotide sequence ID" value="NC_004461.1"/>
</dbReference>
<dbReference type="RefSeq" id="WP_001829707.1">
    <property type="nucleotide sequence ID" value="NZ_WBME01000007.1"/>
</dbReference>
<dbReference type="SMR" id="Q8CNF3"/>
<dbReference type="GeneID" id="50018093"/>
<dbReference type="KEGG" id="sep:SE_1803"/>
<dbReference type="PATRIC" id="fig|176280.10.peg.1760"/>
<dbReference type="eggNOG" id="COG0201">
    <property type="taxonomic scope" value="Bacteria"/>
</dbReference>
<dbReference type="HOGENOM" id="CLU_030313_0_1_9"/>
<dbReference type="OrthoDB" id="9809248at2"/>
<dbReference type="Proteomes" id="UP000001411">
    <property type="component" value="Chromosome"/>
</dbReference>
<dbReference type="GO" id="GO:0005886">
    <property type="term" value="C:plasma membrane"/>
    <property type="evidence" value="ECO:0007669"/>
    <property type="project" value="UniProtKB-SubCell"/>
</dbReference>
<dbReference type="GO" id="GO:0065002">
    <property type="term" value="P:intracellular protein transmembrane transport"/>
    <property type="evidence" value="ECO:0007669"/>
    <property type="project" value="UniProtKB-UniRule"/>
</dbReference>
<dbReference type="GO" id="GO:0006605">
    <property type="term" value="P:protein targeting"/>
    <property type="evidence" value="ECO:0007669"/>
    <property type="project" value="UniProtKB-UniRule"/>
</dbReference>
<dbReference type="GO" id="GO:0043952">
    <property type="term" value="P:protein transport by the Sec complex"/>
    <property type="evidence" value="ECO:0007669"/>
    <property type="project" value="UniProtKB-UniRule"/>
</dbReference>
<dbReference type="FunFam" id="1.10.3370.10:FF:000001">
    <property type="entry name" value="Preprotein translocase subunit SecY"/>
    <property type="match status" value="1"/>
</dbReference>
<dbReference type="Gene3D" id="1.10.3370.10">
    <property type="entry name" value="SecY subunit domain"/>
    <property type="match status" value="1"/>
</dbReference>
<dbReference type="HAMAP" id="MF_01465">
    <property type="entry name" value="SecY"/>
    <property type="match status" value="1"/>
</dbReference>
<dbReference type="InterPro" id="IPR026593">
    <property type="entry name" value="SecY"/>
</dbReference>
<dbReference type="InterPro" id="IPR002208">
    <property type="entry name" value="SecY/SEC61-alpha"/>
</dbReference>
<dbReference type="InterPro" id="IPR030659">
    <property type="entry name" value="SecY_CS"/>
</dbReference>
<dbReference type="InterPro" id="IPR023201">
    <property type="entry name" value="SecY_dom_sf"/>
</dbReference>
<dbReference type="NCBIfam" id="TIGR00967">
    <property type="entry name" value="3a0501s007"/>
    <property type="match status" value="1"/>
</dbReference>
<dbReference type="PANTHER" id="PTHR10906">
    <property type="entry name" value="SECY/SEC61-ALPHA FAMILY MEMBER"/>
    <property type="match status" value="1"/>
</dbReference>
<dbReference type="Pfam" id="PF00344">
    <property type="entry name" value="SecY"/>
    <property type="match status" value="1"/>
</dbReference>
<dbReference type="PIRSF" id="PIRSF004557">
    <property type="entry name" value="SecY"/>
    <property type="match status" value="1"/>
</dbReference>
<dbReference type="PRINTS" id="PR00303">
    <property type="entry name" value="SECYTRNLCASE"/>
</dbReference>
<dbReference type="SUPFAM" id="SSF103491">
    <property type="entry name" value="Preprotein translocase SecY subunit"/>
    <property type="match status" value="1"/>
</dbReference>
<dbReference type="PROSITE" id="PS00755">
    <property type="entry name" value="SECY_1"/>
    <property type="match status" value="1"/>
</dbReference>
<dbReference type="PROSITE" id="PS00756">
    <property type="entry name" value="SECY_2"/>
    <property type="match status" value="1"/>
</dbReference>
<evidence type="ECO:0000255" key="1">
    <source>
        <dbReference type="HAMAP-Rule" id="MF_01465"/>
    </source>
</evidence>
<proteinExistence type="inferred from homology"/>
<keyword id="KW-1003">Cell membrane</keyword>
<keyword id="KW-0472">Membrane</keyword>
<keyword id="KW-0653">Protein transport</keyword>
<keyword id="KW-0811">Translocation</keyword>
<keyword id="KW-0812">Transmembrane</keyword>
<keyword id="KW-1133">Transmembrane helix</keyword>
<keyword id="KW-0813">Transport</keyword>
<sequence>MFQTFVRFFTTKEVRNKIFFTLAMLVIFKIGTYIPAPGVNPEAFNHPQGSQGATELLNTFGGGALKRFSIFAMGIMPYITASIVMQLLQMDIVPKFTEWAKQGEMGRRKINNVTRYFAIILAFIQSIGMAFQFNNYLKGQLIIEKSVMSYLLIAVVLTAGTAFLIWLGDQITQFGVGNGISLIIFAGILSTLPSSLEQFAQSVFVGQDDTSLAWLKILGLIVALILLTVGAIFVLEAKRKIPIQYAKKQSAQRLGSQATYLPLKVNSAGVIPVIFAMAFFLLPRTLTLFFPKAEWAQNIADTANPSSNIGMIIYVVLIIAFAYFYAFVQVNPEKMADNLKKQGSYVPGIRPGEQTKKYITKVLYRLTFVGSIFLAAIAILPIIATKFMGLPQSIQIGGTSLLIVIGVAIETMKTLEAQVTQKEYKGFGGR</sequence>
<feature type="chain" id="PRO_0000131748" description="Protein translocase subunit SecY">
    <location>
        <begin position="1"/>
        <end position="430"/>
    </location>
</feature>
<feature type="transmembrane region" description="Helical" evidence="1">
    <location>
        <begin position="18"/>
        <end position="38"/>
    </location>
</feature>
<feature type="transmembrane region" description="Helical" evidence="1">
    <location>
        <begin position="68"/>
        <end position="88"/>
    </location>
</feature>
<feature type="transmembrane region" description="Helical" evidence="1">
    <location>
        <begin position="117"/>
        <end position="137"/>
    </location>
</feature>
<feature type="transmembrane region" description="Helical" evidence="1">
    <location>
        <begin position="147"/>
        <end position="167"/>
    </location>
</feature>
<feature type="transmembrane region" description="Helical" evidence="1">
    <location>
        <begin position="174"/>
        <end position="194"/>
    </location>
</feature>
<feature type="transmembrane region" description="Helical" evidence="1">
    <location>
        <begin position="217"/>
        <end position="237"/>
    </location>
</feature>
<feature type="transmembrane region" description="Helical" evidence="1">
    <location>
        <begin position="270"/>
        <end position="290"/>
    </location>
</feature>
<feature type="transmembrane region" description="Helical" evidence="1">
    <location>
        <begin position="308"/>
        <end position="328"/>
    </location>
</feature>
<feature type="transmembrane region" description="Helical" evidence="1">
    <location>
        <begin position="368"/>
        <end position="388"/>
    </location>
</feature>
<feature type="transmembrane region" description="Helical" evidence="1">
    <location>
        <begin position="389"/>
        <end position="409"/>
    </location>
</feature>
<accession>Q8CNF3</accession>
<comment type="function">
    <text evidence="1">The central subunit of the protein translocation channel SecYEG. Consists of two halves formed by TMs 1-5 and 6-10. These two domains form a lateral gate at the front which open onto the bilayer between TMs 2 and 7, and are clamped together by SecE at the back. The channel is closed by both a pore ring composed of hydrophobic SecY resides and a short helix (helix 2A) on the extracellular side of the membrane which forms a plug. The plug probably moves laterally to allow the channel to open. The ring and the pore may move independently.</text>
</comment>
<comment type="subunit">
    <text evidence="1">Component of the Sec protein translocase complex. Heterotrimer consisting of SecY, SecE and SecG subunits. The heterotrimers can form oligomers, although 1 heterotrimer is thought to be able to translocate proteins. Interacts with the ribosome. Interacts with SecDF, and other proteins may be involved. Interacts with SecA.</text>
</comment>
<comment type="subcellular location">
    <subcellularLocation>
        <location evidence="1">Cell membrane</location>
        <topology evidence="1">Multi-pass membrane protein</topology>
    </subcellularLocation>
</comment>
<comment type="similarity">
    <text evidence="1">Belongs to the SecY/SEC61-alpha family.</text>
</comment>
<protein>
    <recommendedName>
        <fullName evidence="1">Protein translocase subunit SecY</fullName>
    </recommendedName>
</protein>
<name>SECY_STAES</name>
<reference key="1">
    <citation type="journal article" date="2003" name="Mol. Microbiol.">
        <title>Genome-based analysis of virulence genes in a non-biofilm-forming Staphylococcus epidermidis strain (ATCC 12228).</title>
        <authorList>
            <person name="Zhang Y.-Q."/>
            <person name="Ren S.-X."/>
            <person name="Li H.-L."/>
            <person name="Wang Y.-X."/>
            <person name="Fu G."/>
            <person name="Yang J."/>
            <person name="Qin Z.-Q."/>
            <person name="Miao Y.-G."/>
            <person name="Wang W.-Y."/>
            <person name="Chen R.-S."/>
            <person name="Shen Y."/>
            <person name="Chen Z."/>
            <person name="Yuan Z.-H."/>
            <person name="Zhao G.-P."/>
            <person name="Qu D."/>
            <person name="Danchin A."/>
            <person name="Wen Y.-M."/>
        </authorList>
    </citation>
    <scope>NUCLEOTIDE SEQUENCE [LARGE SCALE GENOMIC DNA]</scope>
    <source>
        <strain>ATCC 12228 / FDA PCI 1200</strain>
    </source>
</reference>